<evidence type="ECO:0000250" key="1">
    <source>
        <dbReference type="UniProtKB" id="Q28146"/>
    </source>
</evidence>
<evidence type="ECO:0000250" key="2">
    <source>
        <dbReference type="UniProtKB" id="Q63372"/>
    </source>
</evidence>
<evidence type="ECO:0000250" key="3">
    <source>
        <dbReference type="UniProtKB" id="Q9CS84"/>
    </source>
</evidence>
<evidence type="ECO:0000255" key="4"/>
<evidence type="ECO:0000255" key="5">
    <source>
        <dbReference type="PROSITE-ProRule" id="PRU00076"/>
    </source>
</evidence>
<evidence type="ECO:0000255" key="6">
    <source>
        <dbReference type="PROSITE-ProRule" id="PRU00122"/>
    </source>
</evidence>
<evidence type="ECO:0000256" key="7">
    <source>
        <dbReference type="SAM" id="MobiDB-lite"/>
    </source>
</evidence>
<evidence type="ECO:0000269" key="8">
    <source>
    </source>
</evidence>
<evidence type="ECO:0000269" key="9">
    <source>
    </source>
</evidence>
<evidence type="ECO:0000269" key="10">
    <source>
    </source>
</evidence>
<evidence type="ECO:0000269" key="11">
    <source>
    </source>
</evidence>
<evidence type="ECO:0000269" key="12">
    <source>
    </source>
</evidence>
<evidence type="ECO:0000269" key="13">
    <source>
    </source>
</evidence>
<evidence type="ECO:0000269" key="14">
    <source>
    </source>
</evidence>
<evidence type="ECO:0000303" key="15">
    <source>
    </source>
</evidence>
<evidence type="ECO:0000303" key="16">
    <source>
    </source>
</evidence>
<evidence type="ECO:0000303" key="17">
    <source>
    </source>
</evidence>
<evidence type="ECO:0000305" key="18"/>
<evidence type="ECO:0007829" key="19">
    <source>
        <dbReference type="PDB" id="6NID"/>
    </source>
</evidence>
<protein>
    <recommendedName>
        <fullName>Neurexin-1</fullName>
    </recommendedName>
    <alternativeName>
        <fullName>Neurexin I-alpha</fullName>
    </alternativeName>
    <alternativeName>
        <fullName>Neurexin-1-alpha</fullName>
    </alternativeName>
</protein>
<feature type="signal peptide" evidence="2">
    <location>
        <begin position="1"/>
        <end position="30"/>
    </location>
</feature>
<feature type="chain" id="PRO_0000019490" description="Neurexin-1">
    <location>
        <begin position="31"/>
        <end position="1477"/>
    </location>
</feature>
<feature type="topological domain" description="Extracellular" evidence="4">
    <location>
        <begin position="31"/>
        <end position="1401"/>
    </location>
</feature>
<feature type="transmembrane region" description="Helical" evidence="4">
    <location>
        <begin position="1402"/>
        <end position="1422"/>
    </location>
</feature>
<feature type="topological domain" description="Cytoplasmic" evidence="4">
    <location>
        <begin position="1423"/>
        <end position="1477"/>
    </location>
</feature>
<feature type="domain" description="Laminin G-like 1" evidence="6">
    <location>
        <begin position="31"/>
        <end position="217"/>
    </location>
</feature>
<feature type="domain" description="EGF-like 1" evidence="5">
    <location>
        <begin position="213"/>
        <end position="256"/>
    </location>
</feature>
<feature type="domain" description="Laminin G-like 2" evidence="6">
    <location>
        <begin position="283"/>
        <end position="473"/>
    </location>
</feature>
<feature type="domain" description="Laminin G-like 3" evidence="6">
    <location>
        <begin position="480"/>
        <end position="672"/>
    </location>
</feature>
<feature type="domain" description="EGF-like 2" evidence="5">
    <location>
        <begin position="676"/>
        <end position="713"/>
    </location>
</feature>
<feature type="domain" description="Laminin G-like 4" evidence="6">
    <location>
        <begin position="718"/>
        <end position="891"/>
    </location>
</feature>
<feature type="domain" description="Laminin G-like 5" evidence="6">
    <location>
        <begin position="905"/>
        <end position="1080"/>
    </location>
</feature>
<feature type="domain" description="EGF-like 3" evidence="5">
    <location>
        <begin position="1083"/>
        <end position="1120"/>
    </location>
</feature>
<feature type="domain" description="Laminin G-like 6" evidence="6">
    <location>
        <begin position="1126"/>
        <end position="1294"/>
    </location>
</feature>
<feature type="region of interest" description="Disordered" evidence="7">
    <location>
        <begin position="198"/>
        <end position="221"/>
    </location>
</feature>
<feature type="region of interest" description="Disordered" evidence="7">
    <location>
        <begin position="1325"/>
        <end position="1390"/>
    </location>
</feature>
<feature type="region of interest" description="Disordered" evidence="7">
    <location>
        <begin position="1444"/>
        <end position="1477"/>
    </location>
</feature>
<feature type="region of interest" description="Interaction with CASK" evidence="3">
    <location>
        <begin position="1444"/>
        <end position="1470"/>
    </location>
</feature>
<feature type="binding site" evidence="1">
    <location>
        <position position="329"/>
    </location>
    <ligand>
        <name>Ca(2+)</name>
        <dbReference type="ChEBI" id="CHEBI:29108"/>
        <label>1</label>
    </ligand>
</feature>
<feature type="binding site" evidence="1">
    <location>
        <position position="346"/>
    </location>
    <ligand>
        <name>Ca(2+)</name>
        <dbReference type="ChEBI" id="CHEBI:29108"/>
        <label>1</label>
    </ligand>
</feature>
<feature type="binding site" evidence="1">
    <location>
        <position position="407"/>
    </location>
    <ligand>
        <name>Ca(2+)</name>
        <dbReference type="ChEBI" id="CHEBI:29108"/>
        <label>1</label>
    </ligand>
</feature>
<feature type="binding site" evidence="1">
    <location>
        <position position="765"/>
    </location>
    <ligand>
        <name>Ca(2+)</name>
        <dbReference type="ChEBI" id="CHEBI:29108"/>
        <label>2</label>
    </ligand>
</feature>
<feature type="binding site" evidence="1">
    <location>
        <position position="782"/>
    </location>
    <ligand>
        <name>Ca(2+)</name>
        <dbReference type="ChEBI" id="CHEBI:29108"/>
        <label>2</label>
    </ligand>
</feature>
<feature type="binding site" evidence="1">
    <location>
        <position position="841"/>
    </location>
    <ligand>
        <name>Ca(2+)</name>
        <dbReference type="ChEBI" id="CHEBI:29108"/>
        <label>2</label>
    </ligand>
</feature>
<feature type="binding site" evidence="3">
    <location>
        <position position="1176"/>
    </location>
    <ligand>
        <name>Ca(2+)</name>
        <dbReference type="ChEBI" id="CHEBI:29108"/>
        <label>3</label>
    </ligand>
</feature>
<feature type="binding site" evidence="3">
    <location>
        <position position="1193"/>
    </location>
    <ligand>
        <name>Ca(2+)</name>
        <dbReference type="ChEBI" id="CHEBI:29108"/>
        <label>3</label>
    </ligand>
</feature>
<feature type="binding site" evidence="3">
    <location>
        <position position="1245"/>
    </location>
    <ligand>
        <name>Ca(2+)</name>
        <dbReference type="ChEBI" id="CHEBI:29108"/>
        <label>3</label>
    </ligand>
</feature>
<feature type="binding site" evidence="3">
    <location>
        <position position="1247"/>
    </location>
    <ligand>
        <name>Ca(2+)</name>
        <dbReference type="ChEBI" id="CHEBI:29108"/>
        <label>3</label>
    </ligand>
</feature>
<feature type="glycosylation site" description="N-linked (GlcNAc...) asparagine" evidence="4">
    <location>
        <position position="125"/>
    </location>
</feature>
<feature type="glycosylation site" description="N-linked (GlcNAc...) asparagine" evidence="4">
    <location>
        <position position="190"/>
    </location>
</feature>
<feature type="glycosylation site" description="N-linked (GlcNAc...) asparagine" evidence="4">
    <location>
        <position position="790"/>
    </location>
</feature>
<feature type="glycosylation site" description="N-linked (GlcNAc...) asparagine" evidence="4">
    <location>
        <position position="1223"/>
    </location>
</feature>
<feature type="glycosylation site" description="O-linked (Xyl...) (heparan sulfate) serine" evidence="3">
    <location>
        <position position="1355"/>
    </location>
</feature>
<feature type="disulfide bond" evidence="5">
    <location>
        <begin position="228"/>
        <end position="243"/>
    </location>
</feature>
<feature type="disulfide bond" evidence="5">
    <location>
        <begin position="245"/>
        <end position="255"/>
    </location>
</feature>
<feature type="disulfide bond" evidence="1">
    <location>
        <begin position="437"/>
        <end position="473"/>
    </location>
</feature>
<feature type="disulfide bond" evidence="1">
    <location>
        <begin position="643"/>
        <end position="672"/>
    </location>
</feature>
<feature type="disulfide bond" evidence="1">
    <location>
        <begin position="680"/>
        <end position="691"/>
    </location>
</feature>
<feature type="disulfide bond" evidence="1">
    <location>
        <begin position="685"/>
        <end position="700"/>
    </location>
</feature>
<feature type="disulfide bond" evidence="1">
    <location>
        <begin position="702"/>
        <end position="712"/>
    </location>
</feature>
<feature type="disulfide bond" evidence="1">
    <location>
        <begin position="883"/>
        <end position="891"/>
    </location>
</feature>
<feature type="disulfide bond" evidence="1">
    <location>
        <begin position="1052"/>
        <end position="1080"/>
    </location>
</feature>
<feature type="disulfide bond" evidence="1">
    <location>
        <begin position="1087"/>
        <end position="1098"/>
    </location>
</feature>
<feature type="disulfide bond" evidence="1">
    <location>
        <begin position="1092"/>
        <end position="1107"/>
    </location>
</feature>
<feature type="disulfide bond" evidence="1">
    <location>
        <begin position="1109"/>
        <end position="1119"/>
    </location>
</feature>
<feature type="splice variant" id="VSP_058200" description="In isoform 4." evidence="15">
    <location>
        <begin position="1"/>
        <end position="1335"/>
    </location>
</feature>
<feature type="splice variant" id="VSP_041353" description="In isoform 3a." evidence="16">
    <original>E</original>
    <variation>EIKFGLQCVLPVLLHDNDQGKYCCINTAKPLTEK</variation>
    <location>
        <position position="258"/>
    </location>
</feature>
<feature type="splice variant" id="VSP_014541" description="In isoform 2a." evidence="17">
    <location>
        <begin position="379"/>
        <end position="386"/>
    </location>
</feature>
<feature type="splice variant" id="VSP_041354" description="In isoform 3a." evidence="16">
    <original>M</original>
    <variation>MVNKLHCS</variation>
    <location>
        <position position="386"/>
    </location>
</feature>
<feature type="splice variant" id="VSP_041355" description="In isoform 3a, isoform 2a and isoform 5." evidence="16 17">
    <original>A</original>
    <variation>AGNNDNERLAIARQRIPYRLGRVVDEWLLDK</variation>
    <location>
        <position position="1239"/>
    </location>
</feature>
<feature type="splice variant" id="VSP_058201" description="In isoform 4." evidence="15">
    <original>GKPPTKEPI</original>
    <variation>MDMRWHCEN</variation>
    <location>
        <begin position="1336"/>
        <end position="1344"/>
    </location>
</feature>
<feature type="splice variant" id="VSP_058202" description="In isoform 4 and isoform 2a." evidence="15 17">
    <location>
        <begin position="1373"/>
        <end position="1375"/>
    </location>
</feature>
<feature type="sequence variant" id="VAR_070274" description="In dbSNP:rs199598542." evidence="12">
    <original>G</original>
    <variation>A</variation>
    <location>
        <position position="28"/>
    </location>
</feature>
<feature type="sequence variant" id="VAR_050265" description="In dbSNP:rs17040901.">
    <original>Y</original>
    <variation>N</variation>
    <location>
        <position position="400"/>
    </location>
</feature>
<feature type="sequence conflict" description="In Ref. 5; CAI46085." evidence="18" ref="5">
    <original>S</original>
    <variation>G</variation>
    <location>
        <position position="1360"/>
    </location>
</feature>
<feature type="strand" evidence="19">
    <location>
        <begin position="1475"/>
        <end position="1477"/>
    </location>
</feature>
<accession>Q9ULB1</accession>
<accession>A7KRL9</accession>
<accession>E7ERL8</accession>
<accession>O60323</accession>
<accession>Q53TJ9</accession>
<accession>Q53TQ1</accession>
<accession>Q5HYI0</accession>
<accession>Q9C079</accession>
<accession>Q9C080</accession>
<accession>Q9C081</accession>
<accession>Q9H3M2</accession>
<accession>Q9UDM6</accession>
<dbReference type="EMBL" id="EF539882">
    <property type="protein sequence ID" value="ABS86974.1"/>
    <property type="molecule type" value="mRNA"/>
</dbReference>
<dbReference type="EMBL" id="AB035356">
    <property type="protein sequence ID" value="BAA87821.1"/>
    <property type="molecule type" value="mRNA"/>
</dbReference>
<dbReference type="EMBL" id="AB011150">
    <property type="protein sequence ID" value="BAA25504.2"/>
    <property type="status" value="ALT_INIT"/>
    <property type="molecule type" value="mRNA"/>
</dbReference>
<dbReference type="EMBL" id="BX647616">
    <property type="protein sequence ID" value="CAI46085.1"/>
    <property type="molecule type" value="mRNA"/>
</dbReference>
<dbReference type="EMBL" id="AC007462">
    <property type="protein sequence ID" value="AAF03536.1"/>
    <property type="molecule type" value="Genomic_DNA"/>
</dbReference>
<dbReference type="EMBL" id="AC007560">
    <property type="status" value="NOT_ANNOTATED_CDS"/>
    <property type="molecule type" value="Genomic_DNA"/>
</dbReference>
<dbReference type="EMBL" id="AC007680">
    <property type="status" value="NOT_ANNOTATED_CDS"/>
    <property type="molecule type" value="Genomic_DNA"/>
</dbReference>
<dbReference type="EMBL" id="AC010721">
    <property type="status" value="NOT_ANNOTATED_CDS"/>
    <property type="molecule type" value="Genomic_DNA"/>
</dbReference>
<dbReference type="EMBL" id="AC069550">
    <property type="protein sequence ID" value="AAG38120.1"/>
    <property type="molecule type" value="Genomic_DNA"/>
</dbReference>
<dbReference type="EMBL" id="AC068725">
    <property type="protein sequence ID" value="AAG59602.1"/>
    <property type="molecule type" value="Genomic_DNA"/>
</dbReference>
<dbReference type="EMBL" id="AC068715">
    <property type="protein sequence ID" value="AAG59642.1"/>
    <property type="molecule type" value="Genomic_DNA"/>
</dbReference>
<dbReference type="EMBL" id="AC078994">
    <property type="protein sequence ID" value="AAK06387.1"/>
    <property type="molecule type" value="Genomic_DNA"/>
</dbReference>
<dbReference type="EMBL" id="AC007682">
    <property type="protein sequence ID" value="AAY14894.1"/>
    <property type="molecule type" value="Genomic_DNA"/>
</dbReference>
<dbReference type="EMBL" id="AC009234">
    <property type="protein sequence ID" value="AAY14944.1"/>
    <property type="molecule type" value="Genomic_DNA"/>
</dbReference>
<dbReference type="CCDS" id="CCDS46282.1">
    <molecule id="Q9ULB1-3"/>
</dbReference>
<dbReference type="CCDS" id="CCDS54360.1">
    <molecule id="Q9ULB1-1"/>
</dbReference>
<dbReference type="CCDS" id="CCDS82445.1">
    <molecule id="Q9ULB1-4"/>
</dbReference>
<dbReference type="CCDS" id="CCDS82450.1">
    <molecule id="Q9ULB1-2"/>
</dbReference>
<dbReference type="CCDS" id="CCDS82451.1">
    <molecule id="Q9ULB1-5"/>
</dbReference>
<dbReference type="RefSeq" id="NP_001129131.1">
    <molecule id="Q9ULB1-3"/>
    <property type="nucleotide sequence ID" value="NM_001135659.3"/>
</dbReference>
<dbReference type="RefSeq" id="NP_001317007.1">
    <molecule id="Q9ULB1-5"/>
    <property type="nucleotide sequence ID" value="NM_001330078.2"/>
</dbReference>
<dbReference type="RefSeq" id="NP_001317011.1">
    <molecule id="Q9ULB1-2"/>
    <property type="nucleotide sequence ID" value="NM_001330082.2"/>
</dbReference>
<dbReference type="RefSeq" id="NP_004792.1">
    <molecule id="Q9ULB1-1"/>
    <property type="nucleotide sequence ID" value="NM_004801.6"/>
</dbReference>
<dbReference type="PDB" id="6NID">
    <property type="method" value="X-ray"/>
    <property type="resolution" value="1.86 A"/>
    <property type="chains" value="D/E/F=1468-1477"/>
</dbReference>
<dbReference type="PDBsum" id="6NID"/>
<dbReference type="SASBDB" id="Q9ULB1"/>
<dbReference type="SMR" id="Q9ULB1"/>
<dbReference type="BioGRID" id="114779">
    <property type="interactions" value="21"/>
</dbReference>
<dbReference type="CORUM" id="Q9ULB1"/>
<dbReference type="FunCoup" id="Q9ULB1">
    <property type="interactions" value="1038"/>
</dbReference>
<dbReference type="IntAct" id="Q9ULB1">
    <property type="interactions" value="8"/>
</dbReference>
<dbReference type="STRING" id="9606.ENSP00000385142"/>
<dbReference type="DrugBank" id="DB11093">
    <property type="generic name" value="Calcium citrate"/>
</dbReference>
<dbReference type="DrugBank" id="DB11348">
    <property type="generic name" value="Calcium Phosphate"/>
</dbReference>
<dbReference type="DrugBank" id="DB14481">
    <property type="generic name" value="Calcium phosphate dihydrate"/>
</dbReference>
<dbReference type="TCDB" id="8.A.74.1.2">
    <property type="family name" value="the tm9 or phg1 targeting receptor (phg1) family"/>
</dbReference>
<dbReference type="GlyConnect" id="1548">
    <property type="glycosylation" value="1 N-Linked glycan (1 site)"/>
</dbReference>
<dbReference type="GlyCosmos" id="Q9ULB1">
    <property type="glycosylation" value="4 sites, 1 glycan"/>
</dbReference>
<dbReference type="GlyGen" id="Q9ULB1">
    <property type="glycosylation" value="6 sites, 5 N-linked glycans (2 sites), 1 O-linked glycan (1 site)"/>
</dbReference>
<dbReference type="iPTMnet" id="Q9ULB1"/>
<dbReference type="PhosphoSitePlus" id="Q9ULB1"/>
<dbReference type="SwissPalm" id="Q9ULB1"/>
<dbReference type="BioMuta" id="NRXN1"/>
<dbReference type="DMDM" id="17369704"/>
<dbReference type="jPOST" id="Q9ULB1"/>
<dbReference type="MassIVE" id="Q9ULB1"/>
<dbReference type="PaxDb" id="9606-ENSP00000385142"/>
<dbReference type="PeptideAtlas" id="Q9ULB1"/>
<dbReference type="ProteomicsDB" id="17810"/>
<dbReference type="ProteomicsDB" id="84967">
    <molecule id="Q9ULB1-1"/>
</dbReference>
<dbReference type="ProteomicsDB" id="84968">
    <molecule id="Q9ULB1-2"/>
</dbReference>
<dbReference type="ProteomicsDB" id="84969">
    <molecule id="Q9ULB1-3"/>
</dbReference>
<dbReference type="Antibodypedia" id="30173">
    <property type="antibodies" value="308 antibodies from 36 providers"/>
</dbReference>
<dbReference type="DNASU" id="9378"/>
<dbReference type="Ensembl" id="ENST00000401669.7">
    <molecule id="Q9ULB1-5"/>
    <property type="protein sequence ID" value="ENSP00000385017.2"/>
    <property type="gene ID" value="ENSG00000179915.25"/>
</dbReference>
<dbReference type="Ensembl" id="ENST00000404971.5">
    <molecule id="Q9ULB1-3"/>
    <property type="protein sequence ID" value="ENSP00000385142.1"/>
    <property type="gene ID" value="ENSG00000179915.25"/>
</dbReference>
<dbReference type="Ensembl" id="ENST00000406316.6">
    <molecule id="Q9ULB1-1"/>
    <property type="protein sequence ID" value="ENSP00000384311.2"/>
    <property type="gene ID" value="ENSG00000179915.25"/>
</dbReference>
<dbReference type="Ensembl" id="ENST00000625672.2">
    <molecule id="Q9ULB1-2"/>
    <property type="protein sequence ID" value="ENSP00000485887.1"/>
    <property type="gene ID" value="ENSG00000179915.25"/>
</dbReference>
<dbReference type="GeneID" id="9378"/>
<dbReference type="MANE-Select" id="ENST00000401669.7">
    <molecule id="Q9ULB1-5"/>
    <property type="protein sequence ID" value="ENSP00000385017.2"/>
    <property type="RefSeq nucleotide sequence ID" value="NM_001330078.2"/>
    <property type="RefSeq protein sequence ID" value="NP_001317007.1"/>
</dbReference>
<dbReference type="UCSC" id="uc061jbb.1">
    <molecule id="Q9ULB1-1"/>
    <property type="organism name" value="human"/>
</dbReference>
<dbReference type="AGR" id="HGNC:8008"/>
<dbReference type="CTD" id="9378"/>
<dbReference type="DisGeNET" id="9378"/>
<dbReference type="GeneCards" id="NRXN1"/>
<dbReference type="HGNC" id="HGNC:8008">
    <property type="gene designation" value="NRXN1"/>
</dbReference>
<dbReference type="HPA" id="ENSG00000179915">
    <property type="expression patterns" value="Tissue enriched (brain)"/>
</dbReference>
<dbReference type="MalaCards" id="NRXN1"/>
<dbReference type="MIM" id="600565">
    <property type="type" value="gene"/>
</dbReference>
<dbReference type="MIM" id="614325">
    <property type="type" value="phenotype"/>
</dbReference>
<dbReference type="MIM" id="614332">
    <property type="type" value="phenotype"/>
</dbReference>
<dbReference type="neXtProt" id="NX_Q9ULB1"/>
<dbReference type="OpenTargets" id="ENSG00000179915"/>
<dbReference type="Orphanet" id="600663">
    <property type="disease" value="NRXN1-related severe neurodevelopmental disorder-motor stereotypies-chronic constipation-sleep-wake cycle disturbance"/>
</dbReference>
<dbReference type="PharmGKB" id="PA31786"/>
<dbReference type="VEuPathDB" id="HostDB:ENSG00000179915"/>
<dbReference type="eggNOG" id="KOG3514">
    <property type="taxonomic scope" value="Eukaryota"/>
</dbReference>
<dbReference type="GeneTree" id="ENSGT00940000154292"/>
<dbReference type="HOGENOM" id="CLU_001710_0_1_1"/>
<dbReference type="InParanoid" id="Q9ULB1"/>
<dbReference type="OMA" id="IKFSLQC"/>
<dbReference type="OrthoDB" id="6275838at2759"/>
<dbReference type="PAN-GO" id="Q9ULB1">
    <property type="GO annotations" value="0 GO annotations based on evolutionary models"/>
</dbReference>
<dbReference type="PhylomeDB" id="Q9ULB1"/>
<dbReference type="TreeFam" id="TF321302"/>
<dbReference type="PathwayCommons" id="Q9ULB1"/>
<dbReference type="Reactome" id="R-HSA-3000171">
    <property type="pathway name" value="Non-integrin membrane-ECM interactions"/>
</dbReference>
<dbReference type="Reactome" id="R-HSA-6794361">
    <property type="pathway name" value="Neurexins and neuroligins"/>
</dbReference>
<dbReference type="SignaLink" id="Q9ULB1"/>
<dbReference type="SIGNOR" id="Q9ULB1"/>
<dbReference type="BioGRID-ORCS" id="9378">
    <property type="hits" value="10 hits in 1138 CRISPR screens"/>
</dbReference>
<dbReference type="CD-CODE" id="FB4E32DD">
    <property type="entry name" value="Presynaptic clusters and postsynaptic densities"/>
</dbReference>
<dbReference type="ChiTaRS" id="NRXN1">
    <property type="organism name" value="human"/>
</dbReference>
<dbReference type="GenomeRNAi" id="9378"/>
<dbReference type="Pharos" id="Q9ULB1">
    <property type="development level" value="Tbio"/>
</dbReference>
<dbReference type="Proteomes" id="UP000005640">
    <property type="component" value="Chromosome 2"/>
</dbReference>
<dbReference type="RNAct" id="Q9ULB1">
    <property type="molecule type" value="protein"/>
</dbReference>
<dbReference type="Bgee" id="ENSG00000179915">
    <property type="expression patterns" value="Expressed in sural nerve and 164 other cell types or tissues"/>
</dbReference>
<dbReference type="ExpressionAtlas" id="Q9ULB1">
    <property type="expression patterns" value="baseline and differential"/>
</dbReference>
<dbReference type="GO" id="GO:0042995">
    <property type="term" value="C:cell projection"/>
    <property type="evidence" value="ECO:0007669"/>
    <property type="project" value="UniProtKB-KW"/>
</dbReference>
<dbReference type="GO" id="GO:0009986">
    <property type="term" value="C:cell surface"/>
    <property type="evidence" value="ECO:0000314"/>
    <property type="project" value="BHF-UCL"/>
</dbReference>
<dbReference type="GO" id="GO:0005783">
    <property type="term" value="C:endoplasmic reticulum"/>
    <property type="evidence" value="ECO:0000250"/>
    <property type="project" value="BHF-UCL"/>
</dbReference>
<dbReference type="GO" id="GO:0043025">
    <property type="term" value="C:neuronal cell body"/>
    <property type="evidence" value="ECO:0000250"/>
    <property type="project" value="BHF-UCL"/>
</dbReference>
<dbReference type="GO" id="GO:0031965">
    <property type="term" value="C:nuclear membrane"/>
    <property type="evidence" value="ECO:0000250"/>
    <property type="project" value="BHF-UCL"/>
</dbReference>
<dbReference type="GO" id="GO:0005730">
    <property type="term" value="C:nucleolus"/>
    <property type="evidence" value="ECO:0000314"/>
    <property type="project" value="HPA"/>
</dbReference>
<dbReference type="GO" id="GO:0005886">
    <property type="term" value="C:plasma membrane"/>
    <property type="evidence" value="ECO:0000314"/>
    <property type="project" value="HPA"/>
</dbReference>
<dbReference type="GO" id="GO:0042734">
    <property type="term" value="C:presynaptic membrane"/>
    <property type="evidence" value="ECO:0000250"/>
    <property type="project" value="BHF-UCL"/>
</dbReference>
<dbReference type="GO" id="GO:0031982">
    <property type="term" value="C:vesicle"/>
    <property type="evidence" value="ECO:0000250"/>
    <property type="project" value="BHF-UCL"/>
</dbReference>
<dbReference type="GO" id="GO:0033130">
    <property type="term" value="F:acetylcholine receptor binding"/>
    <property type="evidence" value="ECO:0000250"/>
    <property type="project" value="BHF-UCL"/>
</dbReference>
<dbReference type="GO" id="GO:0005246">
    <property type="term" value="F:calcium channel regulator activity"/>
    <property type="evidence" value="ECO:0000250"/>
    <property type="project" value="BHF-UCL"/>
</dbReference>
<dbReference type="GO" id="GO:0005509">
    <property type="term" value="F:calcium ion binding"/>
    <property type="evidence" value="ECO:0000250"/>
    <property type="project" value="BHF-UCL"/>
</dbReference>
<dbReference type="GO" id="GO:0050839">
    <property type="term" value="F:cell adhesion molecule binding"/>
    <property type="evidence" value="ECO:0000250"/>
    <property type="project" value="BHF-UCL"/>
</dbReference>
<dbReference type="GO" id="GO:0097109">
    <property type="term" value="F:neuroligin family protein binding"/>
    <property type="evidence" value="ECO:0000250"/>
    <property type="project" value="BHF-UCL"/>
</dbReference>
<dbReference type="GO" id="GO:0038023">
    <property type="term" value="F:signaling receptor activity"/>
    <property type="evidence" value="ECO:0000304"/>
    <property type="project" value="ProtInc"/>
</dbReference>
<dbReference type="GO" id="GO:0030534">
    <property type="term" value="P:adult behavior"/>
    <property type="evidence" value="ECO:0000315"/>
    <property type="project" value="BHF-UCL"/>
</dbReference>
<dbReference type="GO" id="GO:0007411">
    <property type="term" value="P:axon guidance"/>
    <property type="evidence" value="ECO:0000304"/>
    <property type="project" value="ProtInc"/>
</dbReference>
<dbReference type="GO" id="GO:0007268">
    <property type="term" value="P:chemical synaptic transmission"/>
    <property type="evidence" value="ECO:0000250"/>
    <property type="project" value="BHF-UCL"/>
</dbReference>
<dbReference type="GO" id="GO:0097116">
    <property type="term" value="P:gephyrin clustering involved in postsynaptic density assembly"/>
    <property type="evidence" value="ECO:0000250"/>
    <property type="project" value="BHF-UCL"/>
</dbReference>
<dbReference type="GO" id="GO:0007612">
    <property type="term" value="P:learning"/>
    <property type="evidence" value="ECO:0000315"/>
    <property type="project" value="BHF-UCL"/>
</dbReference>
<dbReference type="GO" id="GO:0097118">
    <property type="term" value="P:neuroligin clustering involved in postsynaptic membrane assembly"/>
    <property type="evidence" value="ECO:0000250"/>
    <property type="project" value="BHF-UCL"/>
</dbReference>
<dbReference type="GO" id="GO:0050885">
    <property type="term" value="P:neuromuscular process controlling balance"/>
    <property type="evidence" value="ECO:0000250"/>
    <property type="project" value="BHF-UCL"/>
</dbReference>
<dbReference type="GO" id="GO:0007158">
    <property type="term" value="P:neuron cell-cell adhesion"/>
    <property type="evidence" value="ECO:0000304"/>
    <property type="project" value="BHF-UCL"/>
</dbReference>
<dbReference type="GO" id="GO:0007269">
    <property type="term" value="P:neurotransmitter secretion"/>
    <property type="evidence" value="ECO:0000250"/>
    <property type="project" value="BHF-UCL"/>
</dbReference>
<dbReference type="GO" id="GO:2000463">
    <property type="term" value="P:positive regulation of excitatory postsynaptic potential"/>
    <property type="evidence" value="ECO:0000250"/>
    <property type="project" value="BHF-UCL"/>
</dbReference>
<dbReference type="GO" id="GO:0051965">
    <property type="term" value="P:positive regulation of synapse assembly"/>
    <property type="evidence" value="ECO:0000250"/>
    <property type="project" value="BHF-UCL"/>
</dbReference>
<dbReference type="GO" id="GO:0090129">
    <property type="term" value="P:positive regulation of synapse maturation"/>
    <property type="evidence" value="ECO:0000250"/>
    <property type="project" value="BHF-UCL"/>
</dbReference>
<dbReference type="GO" id="GO:0051968">
    <property type="term" value="P:positive regulation of synaptic transmission, glutamatergic"/>
    <property type="evidence" value="ECO:0000250"/>
    <property type="project" value="BHF-UCL"/>
</dbReference>
<dbReference type="GO" id="GO:0097119">
    <property type="term" value="P:postsynaptic density protein 95 clustering"/>
    <property type="evidence" value="ECO:0000250"/>
    <property type="project" value="BHF-UCL"/>
</dbReference>
<dbReference type="GO" id="GO:0097104">
    <property type="term" value="P:postsynaptic membrane assembly"/>
    <property type="evidence" value="ECO:0000250"/>
    <property type="project" value="BHF-UCL"/>
</dbReference>
<dbReference type="GO" id="GO:0035176">
    <property type="term" value="P:social behavior"/>
    <property type="evidence" value="ECO:0000315"/>
    <property type="project" value="BHF-UCL"/>
</dbReference>
<dbReference type="GO" id="GO:0007416">
    <property type="term" value="P:synapse assembly"/>
    <property type="evidence" value="ECO:0000250"/>
    <property type="project" value="BHF-UCL"/>
</dbReference>
<dbReference type="GO" id="GO:0042297">
    <property type="term" value="P:vocal learning"/>
    <property type="evidence" value="ECO:0000315"/>
    <property type="project" value="BHF-UCL"/>
</dbReference>
<dbReference type="GO" id="GO:0071625">
    <property type="term" value="P:vocalization behavior"/>
    <property type="evidence" value="ECO:0000315"/>
    <property type="project" value="BHF-UCL"/>
</dbReference>
<dbReference type="CDD" id="cd00054">
    <property type="entry name" value="EGF_CA"/>
    <property type="match status" value="1"/>
</dbReference>
<dbReference type="CDD" id="cd00110">
    <property type="entry name" value="LamG"/>
    <property type="match status" value="6"/>
</dbReference>
<dbReference type="FunFam" id="2.10.25.10:FF:000015">
    <property type="entry name" value="neurexin-1 isoform X1"/>
    <property type="match status" value="1"/>
</dbReference>
<dbReference type="FunFam" id="2.10.25.10:FF:000029">
    <property type="entry name" value="neurexin-1 isoform X1"/>
    <property type="match status" value="1"/>
</dbReference>
<dbReference type="FunFam" id="2.10.25.10:FF:000167">
    <property type="entry name" value="neurexin-1 isoform X1"/>
    <property type="match status" value="1"/>
</dbReference>
<dbReference type="FunFam" id="2.60.120.200:FF:000001">
    <property type="entry name" value="neurexin-1 isoform X1"/>
    <property type="match status" value="1"/>
</dbReference>
<dbReference type="FunFam" id="2.60.120.200:FF:000003">
    <property type="entry name" value="neurexin-1 isoform X1"/>
    <property type="match status" value="1"/>
</dbReference>
<dbReference type="FunFam" id="2.60.120.200:FF:000004">
    <property type="entry name" value="neurexin-1 isoform X1"/>
    <property type="match status" value="1"/>
</dbReference>
<dbReference type="FunFam" id="2.60.120.200:FF:000005">
    <property type="entry name" value="neurexin-1 isoform X1"/>
    <property type="match status" value="1"/>
</dbReference>
<dbReference type="FunFam" id="2.60.120.200:FF:000007">
    <property type="entry name" value="neurexin-1 isoform X1"/>
    <property type="match status" value="1"/>
</dbReference>
<dbReference type="FunFam" id="2.60.120.200:FF:000014">
    <property type="entry name" value="neurexin-1 isoform X1"/>
    <property type="match status" value="1"/>
</dbReference>
<dbReference type="Gene3D" id="2.60.120.200">
    <property type="match status" value="6"/>
</dbReference>
<dbReference type="Gene3D" id="2.10.25.10">
    <property type="entry name" value="Laminin"/>
    <property type="match status" value="3"/>
</dbReference>
<dbReference type="InterPro" id="IPR013320">
    <property type="entry name" value="ConA-like_dom_sf"/>
</dbReference>
<dbReference type="InterPro" id="IPR000742">
    <property type="entry name" value="EGF-like_dom"/>
</dbReference>
<dbReference type="InterPro" id="IPR000152">
    <property type="entry name" value="EGF-type_Asp/Asn_hydroxyl_site"/>
</dbReference>
<dbReference type="InterPro" id="IPR001791">
    <property type="entry name" value="Laminin_G"/>
</dbReference>
<dbReference type="InterPro" id="IPR003585">
    <property type="entry name" value="Neurexin-like"/>
</dbReference>
<dbReference type="InterPro" id="IPR050372">
    <property type="entry name" value="Neurexin-related_CASP"/>
</dbReference>
<dbReference type="InterPro" id="IPR027789">
    <property type="entry name" value="Syndecan/Neurexin_dom"/>
</dbReference>
<dbReference type="PANTHER" id="PTHR15036">
    <property type="entry name" value="PIKACHURIN-LIKE PROTEIN"/>
    <property type="match status" value="1"/>
</dbReference>
<dbReference type="PANTHER" id="PTHR15036:SF85">
    <property type="entry name" value="SP2353, ISOFORM A"/>
    <property type="match status" value="1"/>
</dbReference>
<dbReference type="Pfam" id="PF00008">
    <property type="entry name" value="EGF"/>
    <property type="match status" value="1"/>
</dbReference>
<dbReference type="Pfam" id="PF02210">
    <property type="entry name" value="Laminin_G_2"/>
    <property type="match status" value="6"/>
</dbReference>
<dbReference type="Pfam" id="PF01034">
    <property type="entry name" value="Syndecan"/>
    <property type="match status" value="1"/>
</dbReference>
<dbReference type="SMART" id="SM00294">
    <property type="entry name" value="4.1m"/>
    <property type="match status" value="1"/>
</dbReference>
<dbReference type="SMART" id="SM00181">
    <property type="entry name" value="EGF"/>
    <property type="match status" value="3"/>
</dbReference>
<dbReference type="SMART" id="SM00282">
    <property type="entry name" value="LamG"/>
    <property type="match status" value="6"/>
</dbReference>
<dbReference type="SUPFAM" id="SSF49899">
    <property type="entry name" value="Concanavalin A-like lectins/glucanases"/>
    <property type="match status" value="6"/>
</dbReference>
<dbReference type="PROSITE" id="PS00010">
    <property type="entry name" value="ASX_HYDROXYL"/>
    <property type="match status" value="1"/>
</dbReference>
<dbReference type="PROSITE" id="PS50026">
    <property type="entry name" value="EGF_3"/>
    <property type="match status" value="3"/>
</dbReference>
<dbReference type="PROSITE" id="PS50025">
    <property type="entry name" value="LAM_G_DOMAIN"/>
    <property type="match status" value="6"/>
</dbReference>
<keyword id="KW-0002">3D-structure</keyword>
<keyword id="KW-0877">Alternative promoter usage</keyword>
<keyword id="KW-0025">Alternative splicing</keyword>
<keyword id="KW-0106">Calcium</keyword>
<keyword id="KW-0130">Cell adhesion</keyword>
<keyword id="KW-1003">Cell membrane</keyword>
<keyword id="KW-0966">Cell projection</keyword>
<keyword id="KW-1015">Disulfide bond</keyword>
<keyword id="KW-0245">EGF-like domain</keyword>
<keyword id="KW-0325">Glycoprotein</keyword>
<keyword id="KW-0357">Heparan sulfate</keyword>
<keyword id="KW-0991">Intellectual disability</keyword>
<keyword id="KW-0472">Membrane</keyword>
<keyword id="KW-0479">Metal-binding</keyword>
<keyword id="KW-0654">Proteoglycan</keyword>
<keyword id="KW-1267">Proteomics identification</keyword>
<keyword id="KW-1185">Reference proteome</keyword>
<keyword id="KW-0677">Repeat</keyword>
<keyword id="KW-1211">Schizophrenia</keyword>
<keyword id="KW-0732">Signal</keyword>
<keyword id="KW-0770">Synapse</keyword>
<keyword id="KW-0812">Transmembrane</keyword>
<keyword id="KW-1133">Transmembrane helix</keyword>
<name>NRX1A_HUMAN</name>
<sequence>MGTALLQRGGCFLLCLSLLLLGCWAELGSGLEFPGAEGQWTRFPKWNACCESEMSFQLKTRSARGLVLYFDDEGFCDFLELILTRGGRLQLSFSIFCAEPATLLADTPVNDGAWHSVRIRRQFRNTTLFIDQVEAKWVEVKSKRRDMTVFSGLFVGGLPPELRAAALKLTLASVREREPFKGWIRDVRVNSSQVLPVDSGEVKLDDEPPNSGGGSPCEAGEEGEGGVCLNGGVCSVVDDQAVCDCSRTGFRGKDCSQEDNNVEGLAHLMMGDQGKSKGKEEYIATFKGSEYFCYDLSQNPIQSSSDEITLSFKTLQRNGLMLHTGKSADYVNLALKNGAVSLVINLGSGAFEALVEPVNGKFNDNAWHDVKVTRNLRQHSGIGHAMVTISVDGILTTTGYTQEDYTMLGSDDFFYVGGSPSTADLPGSPVSNNFMGCLKEVVYKNNDVRLELSRLAKQGDPKMKIHGVVAFKCENVATLDPITFETPESFISLPKWNAKKTGSISFDFRTTEPNGLILFSHGKPRHQKDAKHPQMIKVDFFAIEMLDGHLYLLLDMGSGTIKIKALLKKVNDGEWYHVDFQRDGRSGTISVNTLRTPYTAPGESEILDLDDELYLGGLPENKAGLVFPTEVWTALLNYGYVGCIRDLFIDGQSKDIRQMAEVQSTAGVKPSCSKETAKPCLSNPCKNNGMCRDGWNRYVCDCSGTGYLGRSCEREATVLSYDGSMFMKIQLPVVMHTEAEDVSLRFRSQRAYGILMATTSRDSADTLRLELDAGRVKLTVNLDCIRINCNSSKGPETLFAGYNLNDNEWHTVRVVRRGKSLKLTVDDQQAMTGQMAGDHTRLEFHNIETGIITERRYLSSVPSNFIGHLQSLTFNGMAYIDLCKNGDIDYCELNARFGFRNIIADPVTFKTKSSYVALATLQAYTSMHLFFQFKTTSLDGLILYNSGDGNDFIVVELVKGYLHYVFDLGNGANLIKGSSNKPLNDNQWHNVMISRDTSNLHTVKIDTKITTQITAGARNLDLKSDLYIGGVAKETYKSLPKLVHAKEGFQGCLASVDLNGRLPDLISDALFCNGQIERGCEGPSTTCQEDSCSNQGVCLQQWDGFSCDCSMTSFSGPLCNDPGTTYIFSKGGGQITYKWPPNDRPSTRADRLAIGFSTVQKEAVLVRVDSSSGLGDYLELHIHQGKIGVKFNVGTDDIAIEESNAIINDGKYHVVRFTRSGGNATLQVDSWPVIERYPAGRQLTIFNSQATIIIGGKEQGQPFQGQLSGLYYNGLKVLNMAAENDANIAIVGNVRLVGEVPSSMTTESTATAMQSEMSTSIMETTTTLATSTARRGKPPTKEPISQTTDDILVASAECPSDDEDIDPCEPSSGGLANPTRAGGREPYPGSAEVIRESSSTTGMVVGIVAAAALCILILLYAMYKYRNRDEGSYHVDESRNYISNSAQSNGAVVKEKQPSSAKSSNKNKKNKDKEYYV</sequence>
<organism>
    <name type="scientific">Homo sapiens</name>
    <name type="common">Human</name>
    <dbReference type="NCBI Taxonomy" id="9606"/>
    <lineage>
        <taxon>Eukaryota</taxon>
        <taxon>Metazoa</taxon>
        <taxon>Chordata</taxon>
        <taxon>Craniata</taxon>
        <taxon>Vertebrata</taxon>
        <taxon>Euteleostomi</taxon>
        <taxon>Mammalia</taxon>
        <taxon>Eutheria</taxon>
        <taxon>Euarchontoglires</taxon>
        <taxon>Primates</taxon>
        <taxon>Haplorrhini</taxon>
        <taxon>Catarrhini</taxon>
        <taxon>Hominidae</taxon>
        <taxon>Homo</taxon>
    </lineage>
</organism>
<gene>
    <name type="primary">NRXN1</name>
    <name type="synonym">KIAA0578</name>
</gene>
<comment type="function">
    <text evidence="3">Cell surface protein involved in cell-cell-interactions, exocytosis of secretory granules and regulation of signal transmission. Function is isoform-specific. Alpha-type isoforms have a long N-terminus with six laminin G-like domains and play an important role in synaptic signal transmission. Alpha-type isoforms play a role in the regulation of calcium channel activity and Ca(2+)-triggered neurotransmitter release at synapses and at neuromuscular junctions. They play an important role in Ca(2+)-triggered exocytosis of secretory granules in pituitary gland. They may affect their functions at synapses and in endocrine cells via their interactions with proteins from the exocytotic machinery. Likewise, alpha-type isoforms play a role in regulating the activity of postsynaptic NMDA receptors, a subtype of glutamate-gated ion channels. Both alpha-type and beta-type isoforms may play a role in the formation or maintenance of synaptic junctions via their interactions (via the extracellular domains) with neuroligin family members, CBLN1 or CBLN2. In vitro, triggers the de novo formation of presynaptic structures. May be involved in specification of excitatory synapses. Alpha-type isoforms were first identified as receptors for alpha-latrotoxin from spider venom.</text>
</comment>
<comment type="subunit">
    <text evidence="1 2 3 13">Interacts (via laminin G-like domain 2 and/or laminin G-like domain 6) with NLGN1 forming a heterotetramer, where one NLGN1 dimer interacts with one NRXN1 dimer. Also interacts (via laminin G-like domain 2 and/or laminin G-like domain 6) with NLGN2, NLGN3 and NLGN4L; interactions with NLGN1, NLGN2, NLGN3 and NLGN4L are calcium-dependent. Interacts (via cytoplasmic C-terminal region) with CASK (via the PDZ, SH3 and guanylate kinase-like domains) (By similarity). Interacts (via cytoplasmic C-terminus) with CASKIN1 and APBA1. Interacts (via laminin G-like domain 2) with NXPH1 and NXPH3. Alpha-type isoforms (neurexin-1-alpha) interact (via laminin G-like domain 2 and/or laminin G-like domain 6) with DAG1 (via alpha-dystroglycan chain). Interacts with LRRTM1, LRRTM2, LRRTM3 and LRRTM4 (By similarity). Interacts with SYT13 and SYTL1. Interacts with CBLN1, CBLN2 and, less avidly, with CBLN4 (By similarity). Interacts with CLSTN3 (PubMed:25352602).</text>
</comment>
<comment type="subcellular location">
    <subcellularLocation>
        <location evidence="3">Presynaptic cell membrane</location>
        <topology evidence="18">Single-pass type I membrane protein</topology>
    </subcellularLocation>
</comment>
<comment type="alternative products">
    <event type="alternative promoter"/>
    <event type="alternative splicing"/>
    <isoform>
        <id>Q9ULB1-1</id>
        <name>1a</name>
        <sequence type="displayed"/>
    </isoform>
    <isoform>
        <id>Q9ULB1-2</id>
        <name>2a</name>
        <sequence type="described" ref="VSP_014541 VSP_041355 VSP_058202"/>
    </isoform>
    <isoform>
        <id>Q9ULB1-3</id>
        <name>3a</name>
        <sequence type="described" ref="VSP_041353 VSP_041354 VSP_041355"/>
    </isoform>
    <isoform>
        <id>P58400-1</id>
        <name>3b</name>
        <sequence type="external"/>
    </isoform>
    <isoform>
        <id>Q9ULB1-4</id>
        <name>4</name>
        <sequence type="described" ref="VSP_058200 VSP_058201 VSP_058202"/>
    </isoform>
    <isoform>
        <id>P58400-2</id>
        <name>1b</name>
        <sequence type="external"/>
    </isoform>
    <isoform>
        <id>Q9ULB1-5</id>
        <name>5</name>
        <sequence type="described" ref="VSP_041355"/>
    </isoform>
    <text evidence="8 9">A number of isoforms are produced by alternative promoter usage including the alpha-type and beta-type isoforms which differ in their N-terminus. Additional isoforms may be produced by alternative splicing.</text>
</comment>
<comment type="tissue specificity">
    <text evidence="14">Brain.</text>
</comment>
<comment type="PTM">
    <text evidence="3">O-glycosylated; contains heparan sulfate. Heparan sulfate attachment is required for synapse development by mediating interactions with neuroligins and LRRTM2.</text>
</comment>
<comment type="disease" evidence="10">
    <disease id="DI-03301">
        <name>Pitt-Hopkins-like syndrome 2</name>
        <acronym>PTHSL2</acronym>
        <description>A syndrome characterized by severe intellectual disability and variable additional symptoms, such as impaired speech development, autistic behavior, breathing anomalies and a broad mouth, resembling Pitt-Hopkins syndrome. Other features include decreased reflexes in the upper extremities, constipation, strabismus, and protruding tongue with drooling. In contrast to patients with Pitt-Hopkins syndrome, PTHSL2 patients present with normal or only mildly to moderately delayed motor milestones.</description>
        <dbReference type="MIM" id="614325"/>
    </disease>
    <text>The disease is caused by variants affecting the gene represented in this entry.</text>
</comment>
<comment type="disease" evidence="11">
    <disease id="DI-03303">
        <name>Schizophrenia 17</name>
        <acronym>SCZD17</acronym>
        <description>A complex, multifactorial psychotic disorder or group of disorders characterized by disturbances in the form and content of thought (e.g. delusions, hallucinations), in mood (e.g. inappropriate affect), in sense of self and relationship to the external world (e.g. loss of ego boundaries, withdrawal), and in behavior (e.g bizarre or apparently purposeless behavior). Although it affects emotions, it is distinguished from mood disorders in which such disturbances are primary. Similarly, there may be mild impairment of cognitive function, and it is distinguished from the dementias in which disturbed cognitive function is considered primary. Some patients manifest schizophrenic as well as bipolar disorder symptoms and are often given the diagnosis of schizoaffective disorder.</description>
        <dbReference type="MIM" id="614332"/>
    </disease>
    <text>Disease susceptibility may be associated with variants affecting the gene represented in this entry.</text>
</comment>
<comment type="miscellaneous">
    <molecule>Isoform 2a</molecule>
    <text evidence="18">Produced by alternative splicing.</text>
</comment>
<comment type="miscellaneous">
    <molecule>Isoform 3a</molecule>
    <text evidence="18">Produced by alternative splicing.</text>
</comment>
<comment type="miscellaneous">
    <molecule>Isoform 4</molecule>
    <text evidence="18">Produced by alternative promoter usage and alternative splicing.</text>
</comment>
<comment type="similarity">
    <text evidence="18">Belongs to the neurexin family.</text>
</comment>
<comment type="sequence caution" evidence="18">
    <conflict type="erroneous initiation">
        <sequence resource="EMBL-CDS" id="BAA25504"/>
    </conflict>
    <text>Extended N-terminus.</text>
</comment>
<proteinExistence type="evidence at protein level"/>
<reference key="1">
    <citation type="journal article" date="2008" name="Am. J. Hum. Genet.">
        <title>Disruption of neurexin 1 associated with autism spectrum disorder.</title>
        <authorList>
            <person name="Kim H.G."/>
            <person name="Kishikawa S."/>
            <person name="Higgins A.W."/>
            <person name="Seong I.S."/>
            <person name="Donovan D.J."/>
            <person name="Shen Y."/>
            <person name="Lally E."/>
            <person name="Weiss L.A."/>
            <person name="Najm J."/>
            <person name="Kutsche K."/>
            <person name="Descartes M."/>
            <person name="Holt L."/>
            <person name="Braddock S."/>
            <person name="Troxell R."/>
            <person name="Kaplan L."/>
            <person name="Volkmar F."/>
            <person name="Klin A."/>
            <person name="Tsatsanis K."/>
            <person name="Harris D.J."/>
            <person name="Noens I."/>
            <person name="Pauls D.L."/>
            <person name="Daly M.J."/>
            <person name="MacDonald M.E."/>
            <person name="Morton C.C."/>
            <person name="Quade B.J."/>
            <person name="Gusella J.F."/>
        </authorList>
    </citation>
    <scope>NUCLEOTIDE SEQUENCE [MRNA] (ISOFORM 3A)</scope>
</reference>
<reference key="2">
    <citation type="submission" date="1999-11" db="EMBL/GenBank/DDBJ databases">
        <title>Human neurexin I-alpha.</title>
        <authorList>
            <person name="Seki N."/>
            <person name="Yoshikawa T."/>
            <person name="Azuma T."/>
            <person name="Saito T."/>
            <person name="Muramatsu M."/>
        </authorList>
    </citation>
    <scope>NUCLEOTIDE SEQUENCE [MRNA] (ISOFORM 1A)</scope>
    <source>
        <tissue>Brain</tissue>
    </source>
</reference>
<reference key="3">
    <citation type="journal article" date="1998" name="DNA Res.">
        <title>Prediction of the coding sequences of unidentified human genes. IX. The complete sequences of 100 new cDNA clones from brain which can code for large proteins in vitro.</title>
        <authorList>
            <person name="Nagase T."/>
            <person name="Ishikawa K."/>
            <person name="Miyajima N."/>
            <person name="Tanaka A."/>
            <person name="Kotani H."/>
            <person name="Nomura N."/>
            <person name="Ohara O."/>
        </authorList>
    </citation>
    <scope>NUCLEOTIDE SEQUENCE [LARGE SCALE MRNA] (ISOFORM 2A)</scope>
    <scope>TISSUE SPECIFICITY</scope>
    <source>
        <tissue>Brain</tissue>
    </source>
</reference>
<reference key="4">
    <citation type="journal article" date="2002" name="DNA Res.">
        <title>Construction of expression-ready cDNA clones for KIAA genes: manual curation of 330 KIAA cDNA clones.</title>
        <authorList>
            <person name="Nakajima D."/>
            <person name="Okazaki N."/>
            <person name="Yamakawa H."/>
            <person name="Kikuno R."/>
            <person name="Ohara O."/>
            <person name="Nagase T."/>
        </authorList>
    </citation>
    <scope>SEQUENCE REVISION</scope>
    <scope>ALTERNATIVE SPLICING</scope>
</reference>
<reference key="5">
    <citation type="journal article" date="2001" name="Genome Res.">
        <title>Towards a catalog of human genes and proteins: sequencing and analysis of 500 novel complete protein coding human cDNAs.</title>
        <authorList>
            <person name="Wiemann S."/>
            <person name="Weil B."/>
            <person name="Wellenreuther R."/>
            <person name="Gassenhuber J."/>
            <person name="Glassl S."/>
            <person name="Ansorge W."/>
            <person name="Boecher M."/>
            <person name="Bloecker H."/>
            <person name="Bauersachs S."/>
            <person name="Blum H."/>
            <person name="Lauber J."/>
            <person name="Duesterhoeft A."/>
            <person name="Beyer A."/>
            <person name="Koehrer K."/>
            <person name="Strack N."/>
            <person name="Mewes H.-W."/>
            <person name="Ottenwaelder B."/>
            <person name="Obermaier B."/>
            <person name="Tampe J."/>
            <person name="Heubner D."/>
            <person name="Wambutt R."/>
            <person name="Korn B."/>
            <person name="Klein M."/>
            <person name="Poustka A."/>
        </authorList>
    </citation>
    <scope>NUCLEOTIDE SEQUENCE [LARGE SCALE MRNA] (ISOFORM 4)</scope>
    <source>
        <tissue>Heart</tissue>
    </source>
</reference>
<reference key="6">
    <citation type="journal article" date="2005" name="Nature">
        <title>Generation and annotation of the DNA sequences of human chromosomes 2 and 4.</title>
        <authorList>
            <person name="Hillier L.W."/>
            <person name="Graves T.A."/>
            <person name="Fulton R.S."/>
            <person name="Fulton L.A."/>
            <person name="Pepin K.H."/>
            <person name="Minx P."/>
            <person name="Wagner-McPherson C."/>
            <person name="Layman D."/>
            <person name="Wylie K."/>
            <person name="Sekhon M."/>
            <person name="Becker M.C."/>
            <person name="Fewell G.A."/>
            <person name="Delehaunty K.D."/>
            <person name="Miner T.L."/>
            <person name="Nash W.E."/>
            <person name="Kremitzki C."/>
            <person name="Oddy L."/>
            <person name="Du H."/>
            <person name="Sun H."/>
            <person name="Bradshaw-Cordum H."/>
            <person name="Ali J."/>
            <person name="Carter J."/>
            <person name="Cordes M."/>
            <person name="Harris A."/>
            <person name="Isak A."/>
            <person name="van Brunt A."/>
            <person name="Nguyen C."/>
            <person name="Du F."/>
            <person name="Courtney L."/>
            <person name="Kalicki J."/>
            <person name="Ozersky P."/>
            <person name="Abbott S."/>
            <person name="Armstrong J."/>
            <person name="Belter E.A."/>
            <person name="Caruso L."/>
            <person name="Cedroni M."/>
            <person name="Cotton M."/>
            <person name="Davidson T."/>
            <person name="Desai A."/>
            <person name="Elliott G."/>
            <person name="Erb T."/>
            <person name="Fronick C."/>
            <person name="Gaige T."/>
            <person name="Haakenson W."/>
            <person name="Haglund K."/>
            <person name="Holmes A."/>
            <person name="Harkins R."/>
            <person name="Kim K."/>
            <person name="Kruchowski S.S."/>
            <person name="Strong C.M."/>
            <person name="Grewal N."/>
            <person name="Goyea E."/>
            <person name="Hou S."/>
            <person name="Levy A."/>
            <person name="Martinka S."/>
            <person name="Mead K."/>
            <person name="McLellan M.D."/>
            <person name="Meyer R."/>
            <person name="Randall-Maher J."/>
            <person name="Tomlinson C."/>
            <person name="Dauphin-Kohlberg S."/>
            <person name="Kozlowicz-Reilly A."/>
            <person name="Shah N."/>
            <person name="Swearengen-Shahid S."/>
            <person name="Snider J."/>
            <person name="Strong J.T."/>
            <person name="Thompson J."/>
            <person name="Yoakum M."/>
            <person name="Leonard S."/>
            <person name="Pearman C."/>
            <person name="Trani L."/>
            <person name="Radionenko M."/>
            <person name="Waligorski J.E."/>
            <person name="Wang C."/>
            <person name="Rock S.M."/>
            <person name="Tin-Wollam A.-M."/>
            <person name="Maupin R."/>
            <person name="Latreille P."/>
            <person name="Wendl M.C."/>
            <person name="Yang S.-P."/>
            <person name="Pohl C."/>
            <person name="Wallis J.W."/>
            <person name="Spieth J."/>
            <person name="Bieri T.A."/>
            <person name="Berkowicz N."/>
            <person name="Nelson J.O."/>
            <person name="Osborne J."/>
            <person name="Ding L."/>
            <person name="Meyer R."/>
            <person name="Sabo A."/>
            <person name="Shotland Y."/>
            <person name="Sinha P."/>
            <person name="Wohldmann P.E."/>
            <person name="Cook L.L."/>
            <person name="Hickenbotham M.T."/>
            <person name="Eldred J."/>
            <person name="Williams D."/>
            <person name="Jones T.A."/>
            <person name="She X."/>
            <person name="Ciccarelli F.D."/>
            <person name="Izaurralde E."/>
            <person name="Taylor J."/>
            <person name="Schmutz J."/>
            <person name="Myers R.M."/>
            <person name="Cox D.R."/>
            <person name="Huang X."/>
            <person name="McPherson J.D."/>
            <person name="Mardis E.R."/>
            <person name="Clifton S.W."/>
            <person name="Warren W.C."/>
            <person name="Chinwalla A.T."/>
            <person name="Eddy S.R."/>
            <person name="Marra M.A."/>
            <person name="Ovcharenko I."/>
            <person name="Furey T.S."/>
            <person name="Miller W."/>
            <person name="Eichler E.E."/>
            <person name="Bork P."/>
            <person name="Suyama M."/>
            <person name="Torrents D."/>
            <person name="Waterston R.H."/>
            <person name="Wilson R.K."/>
        </authorList>
    </citation>
    <scope>NUCLEOTIDE SEQUENCE [LARGE SCALE GENOMIC DNA]</scope>
</reference>
<reference key="7">
    <citation type="journal article" date="2002" name="Genomics">
        <title>Analysis of the human neurexin genes: alternative splicing and the generation of protein diversity.</title>
        <authorList>
            <person name="Rowen L."/>
            <person name="Young J."/>
            <person name="Birditt B."/>
            <person name="Kaur A."/>
            <person name="Madan A."/>
            <person name="Philipps D.L."/>
            <person name="Qin S."/>
            <person name="Minx P."/>
            <person name="Wilson R.K."/>
            <person name="Hood L."/>
            <person name="Graveley B.R."/>
        </authorList>
    </citation>
    <scope>ALTERNATIVE SPLICING</scope>
</reference>
<reference key="8">
    <citation type="journal article" date="2009" name="Am. J. Hum. Genet.">
        <title>CNTNAP2 and NRXN1 are mutated in autosomal-recessive Pitt-Hopkins-like mental retardation and determine the level of a common synaptic protein in Drosophila.</title>
        <authorList>
            <person name="Zweier C."/>
            <person name="de Jong E.K."/>
            <person name="Zweier M."/>
            <person name="Orrico A."/>
            <person name="Ousager L.B."/>
            <person name="Collins A.L."/>
            <person name="Bijlsma E.K."/>
            <person name="Oortveld M.A."/>
            <person name="Ekici A.B."/>
            <person name="Reis A."/>
            <person name="Schenck A."/>
            <person name="Rauch A."/>
        </authorList>
    </citation>
    <scope>INVOLVEMENT IN PTHSL2</scope>
</reference>
<reference key="9">
    <citation type="journal article" date="2011" name="Hum. Genet.">
        <title>Truncating mutations in NRXN2 and NRXN1 in autism spectrum disorders and schizophrenia.</title>
        <authorList>
            <person name="Gauthier J."/>
            <person name="Siddiqui T.J."/>
            <person name="Huashan P."/>
            <person name="Yokomaku D."/>
            <person name="Hamdan F.F."/>
            <person name="Champagne N."/>
            <person name="Lapointe M."/>
            <person name="Spiegelman D."/>
            <person name="Noreau A."/>
            <person name="Lafreniere R.G."/>
            <person name="Fathalli F."/>
            <person name="Joober R."/>
            <person name="Krebs M.O."/>
            <person name="DeLisi L.E."/>
            <person name="Mottron L."/>
            <person name="Fombonne E."/>
            <person name="Michaud J.L."/>
            <person name="Drapeau P."/>
            <person name="Carbonetto S."/>
            <person name="Craig A.M."/>
            <person name="Rouleau G.A."/>
        </authorList>
    </citation>
    <scope>INVOLVEMENT IN SCZD17</scope>
</reference>
<reference key="10">
    <citation type="journal article" date="2014" name="J. Biol. Chem.">
        <title>Calsyntenin-3 molecular architecture and interaction with neurexin 1alpha.</title>
        <authorList>
            <person name="Lu Z."/>
            <person name="Wang Y."/>
            <person name="Chen F."/>
            <person name="Tong H."/>
            <person name="Reddy M.V."/>
            <person name="Luo L."/>
            <person name="Seshadrinathan S."/>
            <person name="Zhang L."/>
            <person name="Holthauzen L.M."/>
            <person name="Craig A.M."/>
            <person name="Ren G."/>
            <person name="Rudenko G."/>
        </authorList>
    </citation>
    <scope>INTERACTION WITH CLSTN3</scope>
</reference>
<reference key="11">
    <citation type="journal article" date="2013" name="Eur. J. Hum. Genet.">
        <title>Prevalence of SHANK3 variants in patients with different subtypes of autism spectrum disorders.</title>
        <authorList>
            <person name="Boccuto L."/>
            <person name="Lauri M."/>
            <person name="Sarasua S.M."/>
            <person name="Skinner C.D."/>
            <person name="Buccella D."/>
            <person name="Dwivedi A."/>
            <person name="Orteschi D."/>
            <person name="Collins J.S."/>
            <person name="Zollino M."/>
            <person name="Visconti P."/>
            <person name="Dupont B."/>
            <person name="Tiziano D."/>
            <person name="Schroer R.J."/>
            <person name="Neri G."/>
            <person name="Stevenson R.E."/>
            <person name="Gurrieri F."/>
            <person name="Schwartz C.E."/>
        </authorList>
    </citation>
    <scope>VARIANT ALA-28</scope>
</reference>